<proteinExistence type="inferred from homology"/>
<evidence type="ECO:0000255" key="1">
    <source>
        <dbReference type="HAMAP-Rule" id="MF_00001"/>
    </source>
</evidence>
<feature type="chain" id="PRO_1000116133" description="Aspartate carbamoyltransferase catalytic subunit">
    <location>
        <begin position="1"/>
        <end position="307"/>
    </location>
</feature>
<feature type="binding site" evidence="1">
    <location>
        <position position="54"/>
    </location>
    <ligand>
        <name>carbamoyl phosphate</name>
        <dbReference type="ChEBI" id="CHEBI:58228"/>
    </ligand>
</feature>
<feature type="binding site" evidence="1">
    <location>
        <position position="55"/>
    </location>
    <ligand>
        <name>carbamoyl phosphate</name>
        <dbReference type="ChEBI" id="CHEBI:58228"/>
    </ligand>
</feature>
<feature type="binding site" evidence="1">
    <location>
        <position position="83"/>
    </location>
    <ligand>
        <name>L-aspartate</name>
        <dbReference type="ChEBI" id="CHEBI:29991"/>
    </ligand>
</feature>
<feature type="binding site" evidence="1">
    <location>
        <position position="104"/>
    </location>
    <ligand>
        <name>carbamoyl phosphate</name>
        <dbReference type="ChEBI" id="CHEBI:58228"/>
    </ligand>
</feature>
<feature type="binding site" evidence="1">
    <location>
        <position position="132"/>
    </location>
    <ligand>
        <name>carbamoyl phosphate</name>
        <dbReference type="ChEBI" id="CHEBI:58228"/>
    </ligand>
</feature>
<feature type="binding site" evidence="1">
    <location>
        <position position="135"/>
    </location>
    <ligand>
        <name>carbamoyl phosphate</name>
        <dbReference type="ChEBI" id="CHEBI:58228"/>
    </ligand>
</feature>
<feature type="binding site" evidence="1">
    <location>
        <position position="165"/>
    </location>
    <ligand>
        <name>L-aspartate</name>
        <dbReference type="ChEBI" id="CHEBI:29991"/>
    </ligand>
</feature>
<feature type="binding site" evidence="1">
    <location>
        <position position="228"/>
    </location>
    <ligand>
        <name>L-aspartate</name>
        <dbReference type="ChEBI" id="CHEBI:29991"/>
    </ligand>
</feature>
<feature type="binding site" evidence="1">
    <location>
        <position position="267"/>
    </location>
    <ligand>
        <name>carbamoyl phosphate</name>
        <dbReference type="ChEBI" id="CHEBI:58228"/>
    </ligand>
</feature>
<feature type="binding site" evidence="1">
    <location>
        <position position="268"/>
    </location>
    <ligand>
        <name>carbamoyl phosphate</name>
        <dbReference type="ChEBI" id="CHEBI:58228"/>
    </ligand>
</feature>
<name>PYRB_CLOBJ</name>
<reference key="1">
    <citation type="submission" date="2008-10" db="EMBL/GenBank/DDBJ databases">
        <title>Genome sequence of Clostridium botulinum A2 Kyoto.</title>
        <authorList>
            <person name="Shrivastava S."/>
            <person name="Brinkac L.M."/>
            <person name="Brown J.L."/>
            <person name="Bruce D."/>
            <person name="Detter C.C."/>
            <person name="Johnson E.A."/>
            <person name="Munk C.A."/>
            <person name="Smith L.A."/>
            <person name="Smith T.J."/>
            <person name="Sutton G."/>
            <person name="Brettin T.S."/>
        </authorList>
    </citation>
    <scope>NUCLEOTIDE SEQUENCE [LARGE SCALE GENOMIC DNA]</scope>
    <source>
        <strain>Kyoto / Type A2</strain>
    </source>
</reference>
<accession>C1FLB6</accession>
<keyword id="KW-0665">Pyrimidine biosynthesis</keyword>
<keyword id="KW-0808">Transferase</keyword>
<comment type="function">
    <text evidence="1">Catalyzes the condensation of carbamoyl phosphate and aspartate to form carbamoyl aspartate and inorganic phosphate, the committed step in the de novo pyrimidine nucleotide biosynthesis pathway.</text>
</comment>
<comment type="catalytic activity">
    <reaction evidence="1">
        <text>carbamoyl phosphate + L-aspartate = N-carbamoyl-L-aspartate + phosphate + H(+)</text>
        <dbReference type="Rhea" id="RHEA:20013"/>
        <dbReference type="ChEBI" id="CHEBI:15378"/>
        <dbReference type="ChEBI" id="CHEBI:29991"/>
        <dbReference type="ChEBI" id="CHEBI:32814"/>
        <dbReference type="ChEBI" id="CHEBI:43474"/>
        <dbReference type="ChEBI" id="CHEBI:58228"/>
        <dbReference type="EC" id="2.1.3.2"/>
    </reaction>
</comment>
<comment type="pathway">
    <text evidence="1">Pyrimidine metabolism; UMP biosynthesis via de novo pathway; (S)-dihydroorotate from bicarbonate: step 2/3.</text>
</comment>
<comment type="subunit">
    <text evidence="1">Heterododecamer (2C3:3R2) of six catalytic PyrB chains organized as two trimers (C3), and six regulatory PyrI chains organized as three dimers (R2).</text>
</comment>
<comment type="similarity">
    <text evidence="1">Belongs to the aspartate/ornithine carbamoyltransferase superfamily. ATCase family.</text>
</comment>
<protein>
    <recommendedName>
        <fullName evidence="1">Aspartate carbamoyltransferase catalytic subunit</fullName>
        <ecNumber evidence="1">2.1.3.2</ecNumber>
    </recommendedName>
    <alternativeName>
        <fullName evidence="1">Aspartate transcarbamylase</fullName>
        <shortName evidence="1">ATCase</shortName>
    </alternativeName>
</protein>
<gene>
    <name evidence="1" type="primary">pyrB</name>
    <name type="ordered locus">CLM_3653</name>
</gene>
<dbReference type="EC" id="2.1.3.2" evidence="1"/>
<dbReference type="EMBL" id="CP001581">
    <property type="protein sequence ID" value="ACO86340.1"/>
    <property type="molecule type" value="Genomic_DNA"/>
</dbReference>
<dbReference type="RefSeq" id="WP_012048210.1">
    <property type="nucleotide sequence ID" value="NC_012563.1"/>
</dbReference>
<dbReference type="SMR" id="C1FLB6"/>
<dbReference type="GeneID" id="5187965"/>
<dbReference type="KEGG" id="cby:CLM_3653"/>
<dbReference type="eggNOG" id="COG0540">
    <property type="taxonomic scope" value="Bacteria"/>
</dbReference>
<dbReference type="HOGENOM" id="CLU_043846_1_2_9"/>
<dbReference type="UniPathway" id="UPA00070">
    <property type="reaction ID" value="UER00116"/>
</dbReference>
<dbReference type="Proteomes" id="UP000001374">
    <property type="component" value="Chromosome"/>
</dbReference>
<dbReference type="GO" id="GO:0016597">
    <property type="term" value="F:amino acid binding"/>
    <property type="evidence" value="ECO:0007669"/>
    <property type="project" value="InterPro"/>
</dbReference>
<dbReference type="GO" id="GO:0004070">
    <property type="term" value="F:aspartate carbamoyltransferase activity"/>
    <property type="evidence" value="ECO:0007669"/>
    <property type="project" value="UniProtKB-UniRule"/>
</dbReference>
<dbReference type="GO" id="GO:0006207">
    <property type="term" value="P:'de novo' pyrimidine nucleobase biosynthetic process"/>
    <property type="evidence" value="ECO:0007669"/>
    <property type="project" value="InterPro"/>
</dbReference>
<dbReference type="GO" id="GO:0044205">
    <property type="term" value="P:'de novo' UMP biosynthetic process"/>
    <property type="evidence" value="ECO:0007669"/>
    <property type="project" value="UniProtKB-UniRule"/>
</dbReference>
<dbReference type="GO" id="GO:0006520">
    <property type="term" value="P:amino acid metabolic process"/>
    <property type="evidence" value="ECO:0007669"/>
    <property type="project" value="InterPro"/>
</dbReference>
<dbReference type="FunFam" id="3.40.50.1370:FF:000002">
    <property type="entry name" value="Aspartate carbamoyltransferase 2"/>
    <property type="match status" value="1"/>
</dbReference>
<dbReference type="Gene3D" id="3.40.50.1370">
    <property type="entry name" value="Aspartate/ornithine carbamoyltransferase"/>
    <property type="match status" value="2"/>
</dbReference>
<dbReference type="HAMAP" id="MF_00001">
    <property type="entry name" value="Asp_carb_tr"/>
    <property type="match status" value="1"/>
</dbReference>
<dbReference type="InterPro" id="IPR006132">
    <property type="entry name" value="Asp/Orn_carbamoyltranf_P-bd"/>
</dbReference>
<dbReference type="InterPro" id="IPR006130">
    <property type="entry name" value="Asp/Orn_carbamoylTrfase"/>
</dbReference>
<dbReference type="InterPro" id="IPR036901">
    <property type="entry name" value="Asp/Orn_carbamoylTrfase_sf"/>
</dbReference>
<dbReference type="InterPro" id="IPR002082">
    <property type="entry name" value="Asp_carbamoyltransf"/>
</dbReference>
<dbReference type="InterPro" id="IPR006131">
    <property type="entry name" value="Asp_carbamoyltransf_Asp/Orn-bd"/>
</dbReference>
<dbReference type="NCBIfam" id="TIGR00670">
    <property type="entry name" value="asp_carb_tr"/>
    <property type="match status" value="1"/>
</dbReference>
<dbReference type="NCBIfam" id="NF002032">
    <property type="entry name" value="PRK00856.1"/>
    <property type="match status" value="1"/>
</dbReference>
<dbReference type="PANTHER" id="PTHR45753:SF6">
    <property type="entry name" value="ASPARTATE CARBAMOYLTRANSFERASE"/>
    <property type="match status" value="1"/>
</dbReference>
<dbReference type="PANTHER" id="PTHR45753">
    <property type="entry name" value="ORNITHINE CARBAMOYLTRANSFERASE, MITOCHONDRIAL"/>
    <property type="match status" value="1"/>
</dbReference>
<dbReference type="Pfam" id="PF00185">
    <property type="entry name" value="OTCace"/>
    <property type="match status" value="1"/>
</dbReference>
<dbReference type="Pfam" id="PF02729">
    <property type="entry name" value="OTCace_N"/>
    <property type="match status" value="1"/>
</dbReference>
<dbReference type="PRINTS" id="PR00100">
    <property type="entry name" value="AOTCASE"/>
</dbReference>
<dbReference type="PRINTS" id="PR00101">
    <property type="entry name" value="ATCASE"/>
</dbReference>
<dbReference type="SUPFAM" id="SSF53671">
    <property type="entry name" value="Aspartate/ornithine carbamoyltransferase"/>
    <property type="match status" value="1"/>
</dbReference>
<dbReference type="PROSITE" id="PS00097">
    <property type="entry name" value="CARBAMOYLTRANSFERASE"/>
    <property type="match status" value="1"/>
</dbReference>
<organism>
    <name type="scientific">Clostridium botulinum (strain Kyoto / Type A2)</name>
    <dbReference type="NCBI Taxonomy" id="536232"/>
    <lineage>
        <taxon>Bacteria</taxon>
        <taxon>Bacillati</taxon>
        <taxon>Bacillota</taxon>
        <taxon>Clostridia</taxon>
        <taxon>Eubacteriales</taxon>
        <taxon>Clostridiaceae</taxon>
        <taxon>Clostridium</taxon>
    </lineage>
</organism>
<sequence length="307" mass="34979">MLKGRNLLDPMDFSLEELEEVFKLADEIIEEPEKFLHVCDGKILATLFYEPSTRTRFSFEAAMLRLGGQVIGFSEPNSSSVAKGESVADTIRTVGCYADIAAMRHPKEGAPAIAAMYSDIPVINAGDGSHQHPTQTLTDLLTIRSLKGDLSNLTIGCCGDLKFGRTVHSLVKALSRYKNNKFVFMSPEELKIPDYIRKEILEKNNIEYKEISKMEDAMAELDILYMTRVQRERFFNEDDYVRLKDSYILDGEKMKYAKKDMMVLHPLPRVNEIAYEIDQDPRGCYFKQAKYGMYVRMALIAKLLGVR</sequence>